<name>DEN2A_HUMAN</name>
<protein>
    <recommendedName>
        <fullName>DENN domain-containing protein 2A</fullName>
    </recommendedName>
</protein>
<proteinExistence type="evidence at protein level"/>
<evidence type="ECO:0000250" key="1">
    <source>
        <dbReference type="UniProtKB" id="Q8C4S8"/>
    </source>
</evidence>
<evidence type="ECO:0000255" key="2">
    <source>
        <dbReference type="PROSITE-ProRule" id="PRU00304"/>
    </source>
</evidence>
<evidence type="ECO:0000256" key="3">
    <source>
        <dbReference type="SAM" id="MobiDB-lite"/>
    </source>
</evidence>
<evidence type="ECO:0000269" key="4">
    <source>
    </source>
</evidence>
<evidence type="ECO:0000269" key="5">
    <source>
    </source>
</evidence>
<evidence type="ECO:0000269" key="6">
    <source>
    </source>
</evidence>
<evidence type="ECO:0000303" key="7">
    <source>
    </source>
</evidence>
<evidence type="ECO:0000305" key="8"/>
<comment type="function">
    <text evidence="6">Guanine nucleotide exchange factor (GEF) which may activate RAB9A and RAB9B. Promotes the exchange of GDP to GTP, converting inactive GDP-bound Rab proteins into their active GTP-bound form. May play a role in late endosomes back to trans-Golgi network/TGN transport.</text>
</comment>
<comment type="interaction">
    <interactant intactId="EBI-13305669">
        <id>Q9ULE3-2</id>
    </interactant>
    <interactant intactId="EBI-346595">
        <id>Q96B97</id>
        <label>SH3KBP1</label>
    </interactant>
    <organismsDiffer>false</organismsDiffer>
    <experiments>3</experiments>
</comment>
<comment type="subcellular location">
    <subcellularLocation>
        <location evidence="6">Cytoplasm</location>
        <location evidence="6">Cytoskeleton</location>
    </subcellularLocation>
    <text>Associated with actin filaments.</text>
</comment>
<comment type="alternative products">
    <event type="alternative splicing"/>
    <isoform>
        <id>Q9ULE3-1</id>
        <name>1</name>
        <sequence type="displayed"/>
    </isoform>
    <isoform>
        <id>Q9ULE3-2</id>
        <name>2</name>
        <sequence type="described" ref="VSP_019466 VSP_019467"/>
    </isoform>
</comment>
<comment type="sequence caution" evidence="8">
    <conflict type="erroneous initiation">
        <sequence resource="EMBL-CDS" id="BAA86591"/>
    </conflict>
    <text>Extended N-terminus.</text>
</comment>
<accession>Q9ULE3</accession>
<accession>C9JUI3</accession>
<accession>Q1RMD5</accession>
<accession>Q86XY0</accession>
<reference key="1">
    <citation type="journal article" date="1999" name="DNA Res.">
        <title>Prediction of the coding sequences of unidentified human genes. XV. The complete sequences of 100 new cDNA clones from brain which code for large proteins in vitro.</title>
        <authorList>
            <person name="Nagase T."/>
            <person name="Ishikawa K."/>
            <person name="Kikuno R."/>
            <person name="Hirosawa M."/>
            <person name="Nomura N."/>
            <person name="Ohara O."/>
        </authorList>
    </citation>
    <scope>NUCLEOTIDE SEQUENCE [LARGE SCALE MRNA] (ISOFORM 1)</scope>
    <scope>VARIANT HIS-156</scope>
    <source>
        <tissue>Brain</tissue>
    </source>
</reference>
<reference key="2">
    <citation type="journal article" date="2003" name="Nature">
        <title>The DNA sequence of human chromosome 7.</title>
        <authorList>
            <person name="Hillier L.W."/>
            <person name="Fulton R.S."/>
            <person name="Fulton L.A."/>
            <person name="Graves T.A."/>
            <person name="Pepin K.H."/>
            <person name="Wagner-McPherson C."/>
            <person name="Layman D."/>
            <person name="Maas J."/>
            <person name="Jaeger S."/>
            <person name="Walker R."/>
            <person name="Wylie K."/>
            <person name="Sekhon M."/>
            <person name="Becker M.C."/>
            <person name="O'Laughlin M.D."/>
            <person name="Schaller M.E."/>
            <person name="Fewell G.A."/>
            <person name="Delehaunty K.D."/>
            <person name="Miner T.L."/>
            <person name="Nash W.E."/>
            <person name="Cordes M."/>
            <person name="Du H."/>
            <person name="Sun H."/>
            <person name="Edwards J."/>
            <person name="Bradshaw-Cordum H."/>
            <person name="Ali J."/>
            <person name="Andrews S."/>
            <person name="Isak A."/>
            <person name="Vanbrunt A."/>
            <person name="Nguyen C."/>
            <person name="Du F."/>
            <person name="Lamar B."/>
            <person name="Courtney L."/>
            <person name="Kalicki J."/>
            <person name="Ozersky P."/>
            <person name="Bielicki L."/>
            <person name="Scott K."/>
            <person name="Holmes A."/>
            <person name="Harkins R."/>
            <person name="Harris A."/>
            <person name="Strong C.M."/>
            <person name="Hou S."/>
            <person name="Tomlinson C."/>
            <person name="Dauphin-Kohlberg S."/>
            <person name="Kozlowicz-Reilly A."/>
            <person name="Leonard S."/>
            <person name="Rohlfing T."/>
            <person name="Rock S.M."/>
            <person name="Tin-Wollam A.-M."/>
            <person name="Abbott A."/>
            <person name="Minx P."/>
            <person name="Maupin R."/>
            <person name="Strowmatt C."/>
            <person name="Latreille P."/>
            <person name="Miller N."/>
            <person name="Johnson D."/>
            <person name="Murray J."/>
            <person name="Woessner J.P."/>
            <person name="Wendl M.C."/>
            <person name="Yang S.-P."/>
            <person name="Schultz B.R."/>
            <person name="Wallis J.W."/>
            <person name="Spieth J."/>
            <person name="Bieri T.A."/>
            <person name="Nelson J.O."/>
            <person name="Berkowicz N."/>
            <person name="Wohldmann P.E."/>
            <person name="Cook L.L."/>
            <person name="Hickenbotham M.T."/>
            <person name="Eldred J."/>
            <person name="Williams D."/>
            <person name="Bedell J.A."/>
            <person name="Mardis E.R."/>
            <person name="Clifton S.W."/>
            <person name="Chissoe S.L."/>
            <person name="Marra M.A."/>
            <person name="Raymond C."/>
            <person name="Haugen E."/>
            <person name="Gillett W."/>
            <person name="Zhou Y."/>
            <person name="James R."/>
            <person name="Phelps K."/>
            <person name="Iadanoto S."/>
            <person name="Bubb K."/>
            <person name="Simms E."/>
            <person name="Levy R."/>
            <person name="Clendenning J."/>
            <person name="Kaul R."/>
            <person name="Kent W.J."/>
            <person name="Furey T.S."/>
            <person name="Baertsch R.A."/>
            <person name="Brent M.R."/>
            <person name="Keibler E."/>
            <person name="Flicek P."/>
            <person name="Bork P."/>
            <person name="Suyama M."/>
            <person name="Bailey J.A."/>
            <person name="Portnoy M.E."/>
            <person name="Torrents D."/>
            <person name="Chinwalla A.T."/>
            <person name="Gish W.R."/>
            <person name="Eddy S.R."/>
            <person name="McPherson J.D."/>
            <person name="Olson M.V."/>
            <person name="Eichler E.E."/>
            <person name="Green E.D."/>
            <person name="Waterston R.H."/>
            <person name="Wilson R.K."/>
        </authorList>
    </citation>
    <scope>NUCLEOTIDE SEQUENCE [LARGE SCALE GENOMIC DNA]</scope>
</reference>
<reference key="3">
    <citation type="journal article" date="2004" name="Genome Res.">
        <title>The status, quality, and expansion of the NIH full-length cDNA project: the Mammalian Gene Collection (MGC).</title>
        <authorList>
            <consortium name="The MGC Project Team"/>
        </authorList>
    </citation>
    <scope>NUCLEOTIDE SEQUENCE [LARGE SCALE MRNA] (ISOFORM 2)</scope>
    <scope>NUCLEOTIDE SEQUENCE [LARGE SCALE MRNA] OF 372-1009 (ISOFORM 1)</scope>
    <scope>VARIANT HIS-156</scope>
    <source>
        <tissue>Embryonic stem cell</tissue>
        <tissue>Liver</tissue>
    </source>
</reference>
<reference key="4">
    <citation type="journal article" date="2010" name="J. Cell Biol.">
        <title>Family-wide characterization of the DENN domain Rab GDP-GTP exchange factors.</title>
        <authorList>
            <person name="Yoshimura S."/>
            <person name="Gerondopoulos A."/>
            <person name="Linford A."/>
            <person name="Rigden D.J."/>
            <person name="Barr F.A."/>
        </authorList>
    </citation>
    <scope>FUNCTION</scope>
    <scope>SUBCELLULAR LOCATION</scope>
</reference>
<feature type="chain" id="PRO_0000242682" description="DENN domain-containing protein 2A">
    <location>
        <begin position="1"/>
        <end position="1009"/>
    </location>
</feature>
<feature type="domain" description="uDENN" evidence="2">
    <location>
        <begin position="566"/>
        <end position="715"/>
    </location>
</feature>
<feature type="domain" description="cDENN" evidence="2">
    <location>
        <begin position="737"/>
        <end position="870"/>
    </location>
</feature>
<feature type="domain" description="dDENN" evidence="2">
    <location>
        <begin position="872"/>
        <end position="969"/>
    </location>
</feature>
<feature type="region of interest" description="Disordered" evidence="3">
    <location>
        <begin position="15"/>
        <end position="153"/>
    </location>
</feature>
<feature type="region of interest" description="Disordered" evidence="3">
    <location>
        <begin position="171"/>
        <end position="334"/>
    </location>
</feature>
<feature type="region of interest" description="Disordered" evidence="3">
    <location>
        <begin position="434"/>
        <end position="479"/>
    </location>
</feature>
<feature type="region of interest" description="Disordered" evidence="3">
    <location>
        <begin position="498"/>
        <end position="532"/>
    </location>
</feature>
<feature type="compositionally biased region" description="Basic and acidic residues" evidence="3">
    <location>
        <begin position="45"/>
        <end position="59"/>
    </location>
</feature>
<feature type="compositionally biased region" description="Basic and acidic residues" evidence="3">
    <location>
        <begin position="130"/>
        <end position="147"/>
    </location>
</feature>
<feature type="compositionally biased region" description="Basic and acidic residues" evidence="3">
    <location>
        <begin position="218"/>
        <end position="247"/>
    </location>
</feature>
<feature type="compositionally biased region" description="Basic and acidic residues" evidence="3">
    <location>
        <begin position="275"/>
        <end position="284"/>
    </location>
</feature>
<feature type="compositionally biased region" description="Pro residues" evidence="3">
    <location>
        <begin position="297"/>
        <end position="314"/>
    </location>
</feature>
<feature type="compositionally biased region" description="Basic and acidic residues" evidence="3">
    <location>
        <begin position="434"/>
        <end position="443"/>
    </location>
</feature>
<feature type="compositionally biased region" description="Polar residues" evidence="3">
    <location>
        <begin position="503"/>
        <end position="513"/>
    </location>
</feature>
<feature type="modified residue" description="Phosphoserine" evidence="1">
    <location>
        <position position="551"/>
    </location>
</feature>
<feature type="splice variant" id="VSP_019466" description="In isoform 2." evidence="7">
    <original>SILSKCCHAMVALIYPFAWQHTYIP</original>
    <variation>RYPPWLLLLKRLNDSRSWTL</variation>
    <location>
        <begin position="776"/>
        <end position="800"/>
    </location>
</feature>
<feature type="splice variant" id="VSP_019467" description="In isoform 2." evidence="7">
    <location>
        <begin position="801"/>
        <end position="1009"/>
    </location>
</feature>
<feature type="sequence variant" id="VAR_026856" description="In dbSNP:rs269243." evidence="4 5">
    <original>P</original>
    <variation>H</variation>
    <location>
        <position position="156"/>
    </location>
</feature>
<feature type="sequence variant" id="VAR_026857" description="In dbSNP:rs2293177.">
    <original>E</original>
    <variation>K</variation>
    <location>
        <position position="729"/>
    </location>
</feature>
<feature type="sequence variant" id="VAR_026858" description="In dbSNP:rs6464833.">
    <original>I</original>
    <variation>T</variation>
    <location>
        <position position="777"/>
    </location>
</feature>
<feature type="sequence conflict" description="In Ref. 3; AAH49193." evidence="8" ref="3">
    <original>F</original>
    <variation>L</variation>
    <location>
        <position position="600"/>
    </location>
</feature>
<feature type="sequence conflict" description="In Ref. 1; BAA86591." evidence="8" ref="1">
    <original>A</original>
    <variation>V</variation>
    <location>
        <position position="864"/>
    </location>
</feature>
<sequence length="1009" mass="113853">MDMFSLDMIISDPAAEASRAGKKQLRGVQNPCPSARARPRHKSLNIKDKISEWEGKKEVPTPAPSRRADGQEDYLPSSTVERRSSDGVRTQVTEAKNGMRPGTESTEKERNKGAVNVGGQDPEPGQDLSQPEREVDPSWGRGREPRLGKLRFQNDPLSVLKQVKKLEQALKDGSAGLDPQLPGTCYSPHCPPDKAEAGSTLPENLGGGSGSEVSQRVHPSDLEGREPTPELVEDRKGSCRRPWDRSLENVYRGSEGSPTKPFINPLPKPRRTFKHAGEGDKDGKPGIGFRKEKRNLPPLPSLPPPPLPSSPPPSSVNRRLWTGRQKSSADHRKSYEFEDLLQSSSESSRVDWYAQTKLGLTRTLSEENVYEDILDPPMKENPYEDIELHGRCLGKKCVLNFPASPTSSIPDTLTKQSLSKPAFFRQNSERRNFKLLDTRKLSRDGTGSPSKISPPSTPSSPDDIFFNLGDPQNGRKKRKIPKLVLRINAIYEVRRGKKRVKRLSQSMESNSGKVTDENSESDSDTEEKLKAHSQRLVNVKSRLKQAPRYPSLARELIEYQERQLFEYFVVVSLHKKQAGAAYVPELTQQFPLKLERSFKFMREAEDQLKAIPQFCFPDAKDWVPVQQFTSETFSFVLTGEDGSRRFGYCRRLLPGGKGKRLPEVYCIVSRLGCFSLFSRILDEVEKRRGISPALVQPLMRSVMEAPFPALGKTILVKNFLPGSGTEVIELCRPLDSRLEHVDFESLFSSLSVRHLVCVFASLLLERRVIFIADKLSILSKCCHAMVALIYPFAWQHTYIPVLPPAMVDIVCSPTPFLIGLLSSSLPLLRELPLEEVLVVDLVNSRFLRQMDDEDSILPRKLQVALEHILEQRNELACEQDEGPLDGRHGPESSPLNEVVSEAFVRFFVEIVGHYSLFLTSGEREERTLQREAFRKAVSSKSLRHFLEVFMETQMFRGFIQERELRRQDAKGLFEVRAQEYLETLPSGEHSGVNKFLKGLGNKMKFLHKK</sequence>
<organism>
    <name type="scientific">Homo sapiens</name>
    <name type="common">Human</name>
    <dbReference type="NCBI Taxonomy" id="9606"/>
    <lineage>
        <taxon>Eukaryota</taxon>
        <taxon>Metazoa</taxon>
        <taxon>Chordata</taxon>
        <taxon>Craniata</taxon>
        <taxon>Vertebrata</taxon>
        <taxon>Euteleostomi</taxon>
        <taxon>Mammalia</taxon>
        <taxon>Eutheria</taxon>
        <taxon>Euarchontoglires</taxon>
        <taxon>Primates</taxon>
        <taxon>Haplorrhini</taxon>
        <taxon>Catarrhini</taxon>
        <taxon>Hominidae</taxon>
        <taxon>Homo</taxon>
    </lineage>
</organism>
<keyword id="KW-0025">Alternative splicing</keyword>
<keyword id="KW-0963">Cytoplasm</keyword>
<keyword id="KW-0206">Cytoskeleton</keyword>
<keyword id="KW-0344">Guanine-nucleotide releasing factor</keyword>
<keyword id="KW-0597">Phosphoprotein</keyword>
<keyword id="KW-0653">Protein transport</keyword>
<keyword id="KW-1267">Proteomics identification</keyword>
<keyword id="KW-1185">Reference proteome</keyword>
<keyword id="KW-0813">Transport</keyword>
<dbReference type="EMBL" id="AB033103">
    <property type="protein sequence ID" value="BAA86591.2"/>
    <property type="status" value="ALT_INIT"/>
    <property type="molecule type" value="mRNA"/>
</dbReference>
<dbReference type="EMBL" id="AC006452">
    <property type="status" value="NOT_ANNOTATED_CDS"/>
    <property type="molecule type" value="Genomic_DNA"/>
</dbReference>
<dbReference type="EMBL" id="AC069335">
    <property type="status" value="NOT_ANNOTATED_CDS"/>
    <property type="molecule type" value="Genomic_DNA"/>
</dbReference>
<dbReference type="EMBL" id="BC049193">
    <property type="protein sequence ID" value="AAH49193.1"/>
    <property type="molecule type" value="mRNA"/>
</dbReference>
<dbReference type="EMBL" id="BC115004">
    <property type="protein sequence ID" value="AAI15005.1"/>
    <property type="molecule type" value="mRNA"/>
</dbReference>
<dbReference type="CCDS" id="CCDS43659.1">
    <molecule id="Q9ULE3-1"/>
</dbReference>
<dbReference type="CCDS" id="CCDS83233.1">
    <molecule id="Q9ULE3-2"/>
</dbReference>
<dbReference type="RefSeq" id="NP_001304981.1">
    <molecule id="Q9ULE3-1"/>
    <property type="nucleotide sequence ID" value="NM_001318052.2"/>
</dbReference>
<dbReference type="RefSeq" id="NP_001304982.1">
    <molecule id="Q9ULE3-2"/>
    <property type="nucleotide sequence ID" value="NM_001318053.2"/>
</dbReference>
<dbReference type="RefSeq" id="NP_001349607.1">
    <molecule id="Q9ULE3-1"/>
    <property type="nucleotide sequence ID" value="NM_001362678.2"/>
</dbReference>
<dbReference type="RefSeq" id="NP_056504.3">
    <molecule id="Q9ULE3-1"/>
    <property type="nucleotide sequence ID" value="NM_015689.5"/>
</dbReference>
<dbReference type="RefSeq" id="XP_005250034.1">
    <property type="nucleotide sequence ID" value="XM_005249977.3"/>
</dbReference>
<dbReference type="RefSeq" id="XP_011514354.1">
    <property type="nucleotide sequence ID" value="XM_011516052.2"/>
</dbReference>
<dbReference type="RefSeq" id="XP_011514355.1">
    <property type="nucleotide sequence ID" value="XM_011516053.2"/>
</dbReference>
<dbReference type="RefSeq" id="XP_016867478.1">
    <property type="nucleotide sequence ID" value="XM_017011989.1"/>
</dbReference>
<dbReference type="SMR" id="Q9ULE3"/>
<dbReference type="BioGRID" id="118031">
    <property type="interactions" value="5"/>
</dbReference>
<dbReference type="FunCoup" id="Q9ULE3">
    <property type="interactions" value="203"/>
</dbReference>
<dbReference type="IntAct" id="Q9ULE3">
    <property type="interactions" value="4"/>
</dbReference>
<dbReference type="MINT" id="Q9ULE3"/>
<dbReference type="STRING" id="9606.ENSP00000419654"/>
<dbReference type="GlyGen" id="Q9ULE3">
    <property type="glycosylation" value="5 sites, 1 O-linked glycan (2 sites)"/>
</dbReference>
<dbReference type="iPTMnet" id="Q9ULE3"/>
<dbReference type="PhosphoSitePlus" id="Q9ULE3"/>
<dbReference type="SwissPalm" id="Q9ULE3"/>
<dbReference type="BioMuta" id="DENND2A"/>
<dbReference type="DMDM" id="296439469"/>
<dbReference type="jPOST" id="Q9ULE3"/>
<dbReference type="MassIVE" id="Q9ULE3"/>
<dbReference type="PaxDb" id="9606-ENSP00000275884"/>
<dbReference type="PeptideAtlas" id="Q9ULE3"/>
<dbReference type="ProteomicsDB" id="85008">
    <molecule id="Q9ULE3-1"/>
</dbReference>
<dbReference type="ProteomicsDB" id="85009">
    <molecule id="Q9ULE3-2"/>
</dbReference>
<dbReference type="Antibodypedia" id="32452">
    <property type="antibodies" value="33 antibodies from 12 providers"/>
</dbReference>
<dbReference type="DNASU" id="27147"/>
<dbReference type="Ensembl" id="ENST00000275884.10">
    <molecule id="Q9ULE3-1"/>
    <property type="protein sequence ID" value="ENSP00000275884.6"/>
    <property type="gene ID" value="ENSG00000146966.13"/>
</dbReference>
<dbReference type="Ensembl" id="ENST00000492720.5">
    <molecule id="Q9ULE3-2"/>
    <property type="protein sequence ID" value="ENSP00000419464.1"/>
    <property type="gene ID" value="ENSG00000146966.13"/>
</dbReference>
<dbReference type="Ensembl" id="ENST00000496613.6">
    <molecule id="Q9ULE3-1"/>
    <property type="protein sequence ID" value="ENSP00000419654.1"/>
    <property type="gene ID" value="ENSG00000146966.13"/>
</dbReference>
<dbReference type="Ensembl" id="ENST00000537639.5">
    <molecule id="Q9ULE3-1"/>
    <property type="protein sequence ID" value="ENSP00000442245.1"/>
    <property type="gene ID" value="ENSG00000146966.13"/>
</dbReference>
<dbReference type="GeneID" id="27147"/>
<dbReference type="KEGG" id="hsa:27147"/>
<dbReference type="MANE-Select" id="ENST00000496613.6">
    <property type="protein sequence ID" value="ENSP00000419654.1"/>
    <property type="RefSeq nucleotide sequence ID" value="NM_015689.5"/>
    <property type="RefSeq protein sequence ID" value="NP_056504.3"/>
</dbReference>
<dbReference type="UCSC" id="uc003vvw.3">
    <molecule id="Q9ULE3-1"/>
    <property type="organism name" value="human"/>
</dbReference>
<dbReference type="AGR" id="HGNC:22212"/>
<dbReference type="CTD" id="27147"/>
<dbReference type="DisGeNET" id="27147"/>
<dbReference type="GeneCards" id="DENND2A"/>
<dbReference type="HGNC" id="HGNC:22212">
    <property type="gene designation" value="DENND2A"/>
</dbReference>
<dbReference type="HPA" id="ENSG00000146966">
    <property type="expression patterns" value="Low tissue specificity"/>
</dbReference>
<dbReference type="MIM" id="620120">
    <property type="type" value="gene"/>
</dbReference>
<dbReference type="neXtProt" id="NX_Q9ULE3"/>
<dbReference type="OpenTargets" id="ENSG00000146966"/>
<dbReference type="PharmGKB" id="PA134931054"/>
<dbReference type="VEuPathDB" id="HostDB:ENSG00000146966"/>
<dbReference type="eggNOG" id="KOG3569">
    <property type="taxonomic scope" value="Eukaryota"/>
</dbReference>
<dbReference type="GeneTree" id="ENSGT00950000182931"/>
<dbReference type="HOGENOM" id="CLU_008960_1_1_1"/>
<dbReference type="InParanoid" id="Q9ULE3"/>
<dbReference type="OMA" id="CPAYVPL"/>
<dbReference type="OrthoDB" id="10266080at2759"/>
<dbReference type="PAN-GO" id="Q9ULE3">
    <property type="GO annotations" value="2 GO annotations based on evolutionary models"/>
</dbReference>
<dbReference type="PhylomeDB" id="Q9ULE3"/>
<dbReference type="TreeFam" id="TF320336"/>
<dbReference type="PathwayCommons" id="Q9ULE3"/>
<dbReference type="Reactome" id="R-HSA-8876198">
    <property type="pathway name" value="RAB GEFs exchange GTP for GDP on RABs"/>
</dbReference>
<dbReference type="SignaLink" id="Q9ULE3"/>
<dbReference type="BioGRID-ORCS" id="27147">
    <property type="hits" value="15 hits in 1145 CRISPR screens"/>
</dbReference>
<dbReference type="ChiTaRS" id="DENND2A">
    <property type="organism name" value="human"/>
</dbReference>
<dbReference type="GenomeRNAi" id="27147"/>
<dbReference type="Pharos" id="Q9ULE3">
    <property type="development level" value="Tbio"/>
</dbReference>
<dbReference type="PRO" id="PR:Q9ULE3"/>
<dbReference type="Proteomes" id="UP000005640">
    <property type="component" value="Chromosome 7"/>
</dbReference>
<dbReference type="RNAct" id="Q9ULE3">
    <property type="molecule type" value="protein"/>
</dbReference>
<dbReference type="Bgee" id="ENSG00000146966">
    <property type="expression patterns" value="Expressed in left uterine tube and 163 other cell types or tissues"/>
</dbReference>
<dbReference type="ExpressionAtlas" id="Q9ULE3">
    <property type="expression patterns" value="baseline and differential"/>
</dbReference>
<dbReference type="GO" id="GO:0015629">
    <property type="term" value="C:actin cytoskeleton"/>
    <property type="evidence" value="ECO:0000314"/>
    <property type="project" value="UniProtKB"/>
</dbReference>
<dbReference type="GO" id="GO:0005829">
    <property type="term" value="C:cytosol"/>
    <property type="evidence" value="ECO:0000304"/>
    <property type="project" value="Reactome"/>
</dbReference>
<dbReference type="GO" id="GO:0005085">
    <property type="term" value="F:guanyl-nucleotide exchange factor activity"/>
    <property type="evidence" value="ECO:0000314"/>
    <property type="project" value="UniProtKB"/>
</dbReference>
<dbReference type="GO" id="GO:0015031">
    <property type="term" value="P:protein transport"/>
    <property type="evidence" value="ECO:0007669"/>
    <property type="project" value="UniProtKB-KW"/>
</dbReference>
<dbReference type="GO" id="GO:0042147">
    <property type="term" value="P:retrograde transport, endosome to Golgi"/>
    <property type="evidence" value="ECO:0000315"/>
    <property type="project" value="UniProtKB"/>
</dbReference>
<dbReference type="FunFam" id="3.30.450.200:FF:000001">
    <property type="entry name" value="DENN domain-containing protein 2A isoform X1"/>
    <property type="match status" value="1"/>
</dbReference>
<dbReference type="FunFam" id="3.40.50.11500:FF:000004">
    <property type="entry name" value="DENN domain-containing protein 2C isoform X1"/>
    <property type="match status" value="1"/>
</dbReference>
<dbReference type="Gene3D" id="3.30.450.200">
    <property type="match status" value="1"/>
</dbReference>
<dbReference type="Gene3D" id="3.40.50.11500">
    <property type="match status" value="1"/>
</dbReference>
<dbReference type="InterPro" id="IPR001194">
    <property type="entry name" value="cDENN_dom"/>
</dbReference>
<dbReference type="InterPro" id="IPR005112">
    <property type="entry name" value="dDENN_dom"/>
</dbReference>
<dbReference type="InterPro" id="IPR043153">
    <property type="entry name" value="DENN_C"/>
</dbReference>
<dbReference type="InterPro" id="IPR051942">
    <property type="entry name" value="DENN_domain_containing_2"/>
</dbReference>
<dbReference type="InterPro" id="IPR037516">
    <property type="entry name" value="Tripartite_DENN"/>
</dbReference>
<dbReference type="InterPro" id="IPR005113">
    <property type="entry name" value="uDENN_dom"/>
</dbReference>
<dbReference type="PANTHER" id="PTHR15288">
    <property type="entry name" value="DENN DOMAIN-CONTAINING PROTEIN 2"/>
    <property type="match status" value="1"/>
</dbReference>
<dbReference type="PANTHER" id="PTHR15288:SF3">
    <property type="entry name" value="DENN DOMAIN-CONTAINING PROTEIN 2A"/>
    <property type="match status" value="1"/>
</dbReference>
<dbReference type="Pfam" id="PF03455">
    <property type="entry name" value="dDENN"/>
    <property type="match status" value="1"/>
</dbReference>
<dbReference type="Pfam" id="PF02141">
    <property type="entry name" value="DENN"/>
    <property type="match status" value="1"/>
</dbReference>
<dbReference type="Pfam" id="PF03456">
    <property type="entry name" value="uDENN"/>
    <property type="match status" value="1"/>
</dbReference>
<dbReference type="SMART" id="SM00801">
    <property type="entry name" value="dDENN"/>
    <property type="match status" value="1"/>
</dbReference>
<dbReference type="SMART" id="SM00799">
    <property type="entry name" value="DENN"/>
    <property type="match status" value="1"/>
</dbReference>
<dbReference type="SMART" id="SM00800">
    <property type="entry name" value="uDENN"/>
    <property type="match status" value="1"/>
</dbReference>
<dbReference type="PROSITE" id="PS50211">
    <property type="entry name" value="DENN"/>
    <property type="match status" value="1"/>
</dbReference>
<gene>
    <name type="primary">DENND2A</name>
    <name type="synonym">KIAA1277</name>
</gene>